<proteinExistence type="predicted"/>
<organism>
    <name type="scientific">Bacillus subtilis (strain 168)</name>
    <dbReference type="NCBI Taxonomy" id="224308"/>
    <lineage>
        <taxon>Bacteria</taxon>
        <taxon>Bacillati</taxon>
        <taxon>Bacillota</taxon>
        <taxon>Bacilli</taxon>
        <taxon>Bacillales</taxon>
        <taxon>Bacillaceae</taxon>
        <taxon>Bacillus</taxon>
    </lineage>
</organism>
<accession>O31816</accession>
<dbReference type="EMBL" id="AL009126">
    <property type="protein sequence ID" value="CAB13667.1"/>
    <property type="molecule type" value="Genomic_DNA"/>
</dbReference>
<dbReference type="PIR" id="D69890">
    <property type="entry name" value="D69890"/>
</dbReference>
<dbReference type="RefSeq" id="NP_389666.1">
    <property type="nucleotide sequence ID" value="NC_000964.3"/>
</dbReference>
<dbReference type="RefSeq" id="WP_003231606.1">
    <property type="nucleotide sequence ID" value="NC_000964.3"/>
</dbReference>
<dbReference type="FunCoup" id="O31816">
    <property type="interactions" value="88"/>
</dbReference>
<dbReference type="STRING" id="224308.BSU17830"/>
<dbReference type="PaxDb" id="224308-BSU17830"/>
<dbReference type="EnsemblBacteria" id="CAB13667">
    <property type="protein sequence ID" value="CAB13667"/>
    <property type="gene ID" value="BSU_17830"/>
</dbReference>
<dbReference type="GeneID" id="938236"/>
<dbReference type="KEGG" id="bsu:BSU17830"/>
<dbReference type="PATRIC" id="fig|224308.43.peg.1888"/>
<dbReference type="eggNOG" id="ENOG5032Z7G">
    <property type="taxonomic scope" value="Bacteria"/>
</dbReference>
<dbReference type="InParanoid" id="O31816"/>
<dbReference type="OrthoDB" id="2111682at2"/>
<dbReference type="PhylomeDB" id="O31816"/>
<dbReference type="BioCyc" id="BSUB:BSU17830-MONOMER"/>
<dbReference type="Proteomes" id="UP000001570">
    <property type="component" value="Chromosome"/>
</dbReference>
<dbReference type="GO" id="GO:0005886">
    <property type="term" value="C:plasma membrane"/>
    <property type="evidence" value="ECO:0007669"/>
    <property type="project" value="UniProtKB-SubCell"/>
</dbReference>
<dbReference type="InterPro" id="IPR019649">
    <property type="entry name" value="DUF2512"/>
</dbReference>
<dbReference type="Pfam" id="PF10710">
    <property type="entry name" value="DUF2512"/>
    <property type="match status" value="1"/>
</dbReference>
<evidence type="ECO:0000255" key="1"/>
<evidence type="ECO:0000305" key="2"/>
<feature type="chain" id="PRO_0000370258" description="Uncharacterized membrane protein YndM">
    <location>
        <begin position="1"/>
        <end position="179"/>
    </location>
</feature>
<feature type="transmembrane region" description="Helical" evidence="1">
    <location>
        <begin position="33"/>
        <end position="53"/>
    </location>
</feature>
<feature type="transmembrane region" description="Helical" evidence="1">
    <location>
        <begin position="63"/>
        <end position="83"/>
    </location>
</feature>
<feature type="transmembrane region" description="Helical" evidence="1">
    <location>
        <begin position="89"/>
        <end position="109"/>
    </location>
</feature>
<feature type="transmembrane region" description="Helical" evidence="1">
    <location>
        <begin position="115"/>
        <end position="135"/>
    </location>
</feature>
<keyword id="KW-1003">Cell membrane</keyword>
<keyword id="KW-0472">Membrane</keyword>
<keyword id="KW-1185">Reference proteome</keyword>
<keyword id="KW-0812">Transmembrane</keyword>
<keyword id="KW-1133">Transmembrane helix</keyword>
<sequence>MTIMNGFELHYLSFVYAQEFSSKNNNLGGQMKHIIALASKIAFTLALLYVILDRVYHASFLSVMFIALFLGFVSYLSGDMLVLPRTNNITASLADFGLSFVILWVFVLTQTRNDFSPFGAALLSAACLTVFEYFFHRYLLKNVLDENFRNELSARDNTLQYQTEAADELFPETKEKHKE</sequence>
<name>YNDM_BACSU</name>
<gene>
    <name type="primary">yndM</name>
    <name type="ordered locus">BSU17830</name>
</gene>
<reference key="1">
    <citation type="journal article" date="1997" name="Nature">
        <title>The complete genome sequence of the Gram-positive bacterium Bacillus subtilis.</title>
        <authorList>
            <person name="Kunst F."/>
            <person name="Ogasawara N."/>
            <person name="Moszer I."/>
            <person name="Albertini A.M."/>
            <person name="Alloni G."/>
            <person name="Azevedo V."/>
            <person name="Bertero M.G."/>
            <person name="Bessieres P."/>
            <person name="Bolotin A."/>
            <person name="Borchert S."/>
            <person name="Borriss R."/>
            <person name="Boursier L."/>
            <person name="Brans A."/>
            <person name="Braun M."/>
            <person name="Brignell S.C."/>
            <person name="Bron S."/>
            <person name="Brouillet S."/>
            <person name="Bruschi C.V."/>
            <person name="Caldwell B."/>
            <person name="Capuano V."/>
            <person name="Carter N.M."/>
            <person name="Choi S.-K."/>
            <person name="Codani J.-J."/>
            <person name="Connerton I.F."/>
            <person name="Cummings N.J."/>
            <person name="Daniel R.A."/>
            <person name="Denizot F."/>
            <person name="Devine K.M."/>
            <person name="Duesterhoeft A."/>
            <person name="Ehrlich S.D."/>
            <person name="Emmerson P.T."/>
            <person name="Entian K.-D."/>
            <person name="Errington J."/>
            <person name="Fabret C."/>
            <person name="Ferrari E."/>
            <person name="Foulger D."/>
            <person name="Fritz C."/>
            <person name="Fujita M."/>
            <person name="Fujita Y."/>
            <person name="Fuma S."/>
            <person name="Galizzi A."/>
            <person name="Galleron N."/>
            <person name="Ghim S.-Y."/>
            <person name="Glaser P."/>
            <person name="Goffeau A."/>
            <person name="Golightly E.J."/>
            <person name="Grandi G."/>
            <person name="Guiseppi G."/>
            <person name="Guy B.J."/>
            <person name="Haga K."/>
            <person name="Haiech J."/>
            <person name="Harwood C.R."/>
            <person name="Henaut A."/>
            <person name="Hilbert H."/>
            <person name="Holsappel S."/>
            <person name="Hosono S."/>
            <person name="Hullo M.-F."/>
            <person name="Itaya M."/>
            <person name="Jones L.-M."/>
            <person name="Joris B."/>
            <person name="Karamata D."/>
            <person name="Kasahara Y."/>
            <person name="Klaerr-Blanchard M."/>
            <person name="Klein C."/>
            <person name="Kobayashi Y."/>
            <person name="Koetter P."/>
            <person name="Koningstein G."/>
            <person name="Krogh S."/>
            <person name="Kumano M."/>
            <person name="Kurita K."/>
            <person name="Lapidus A."/>
            <person name="Lardinois S."/>
            <person name="Lauber J."/>
            <person name="Lazarevic V."/>
            <person name="Lee S.-M."/>
            <person name="Levine A."/>
            <person name="Liu H."/>
            <person name="Masuda S."/>
            <person name="Mauel C."/>
            <person name="Medigue C."/>
            <person name="Medina N."/>
            <person name="Mellado R.P."/>
            <person name="Mizuno M."/>
            <person name="Moestl D."/>
            <person name="Nakai S."/>
            <person name="Noback M."/>
            <person name="Noone D."/>
            <person name="O'Reilly M."/>
            <person name="Ogawa K."/>
            <person name="Ogiwara A."/>
            <person name="Oudega B."/>
            <person name="Park S.-H."/>
            <person name="Parro V."/>
            <person name="Pohl T.M."/>
            <person name="Portetelle D."/>
            <person name="Porwollik S."/>
            <person name="Prescott A.M."/>
            <person name="Presecan E."/>
            <person name="Pujic P."/>
            <person name="Purnelle B."/>
            <person name="Rapoport G."/>
            <person name="Rey M."/>
            <person name="Reynolds S."/>
            <person name="Rieger M."/>
            <person name="Rivolta C."/>
            <person name="Rocha E."/>
            <person name="Roche B."/>
            <person name="Rose M."/>
            <person name="Sadaie Y."/>
            <person name="Sato T."/>
            <person name="Scanlan E."/>
            <person name="Schleich S."/>
            <person name="Schroeter R."/>
            <person name="Scoffone F."/>
            <person name="Sekiguchi J."/>
            <person name="Sekowska A."/>
            <person name="Seror S.J."/>
            <person name="Serror P."/>
            <person name="Shin B.-S."/>
            <person name="Soldo B."/>
            <person name="Sorokin A."/>
            <person name="Tacconi E."/>
            <person name="Takagi T."/>
            <person name="Takahashi H."/>
            <person name="Takemaru K."/>
            <person name="Takeuchi M."/>
            <person name="Tamakoshi A."/>
            <person name="Tanaka T."/>
            <person name="Terpstra P."/>
            <person name="Tognoni A."/>
            <person name="Tosato V."/>
            <person name="Uchiyama S."/>
            <person name="Vandenbol M."/>
            <person name="Vannier F."/>
            <person name="Vassarotti A."/>
            <person name="Viari A."/>
            <person name="Wambutt R."/>
            <person name="Wedler E."/>
            <person name="Wedler H."/>
            <person name="Weitzenegger T."/>
            <person name="Winters P."/>
            <person name="Wipat A."/>
            <person name="Yamamoto H."/>
            <person name="Yamane K."/>
            <person name="Yasumoto K."/>
            <person name="Yata K."/>
            <person name="Yoshida K."/>
            <person name="Yoshikawa H.-F."/>
            <person name="Zumstein E."/>
            <person name="Yoshikawa H."/>
            <person name="Danchin A."/>
        </authorList>
    </citation>
    <scope>NUCLEOTIDE SEQUENCE [LARGE SCALE GENOMIC DNA]</scope>
    <source>
        <strain>168</strain>
    </source>
</reference>
<comment type="subcellular location">
    <subcellularLocation>
        <location evidence="2">Cell membrane</location>
        <topology evidence="2">Multi-pass membrane protein</topology>
    </subcellularLocation>
</comment>
<protein>
    <recommendedName>
        <fullName>Uncharacterized membrane protein YndM</fullName>
    </recommendedName>
</protein>